<reference key="1">
    <citation type="submission" date="2006-06" db="EMBL/GenBank/DDBJ databases">
        <title>Complete sequence of chromosome of Mesorhizobium sp. BNC1.</title>
        <authorList>
            <consortium name="US DOE Joint Genome Institute"/>
            <person name="Copeland A."/>
            <person name="Lucas S."/>
            <person name="Lapidus A."/>
            <person name="Barry K."/>
            <person name="Detter J.C."/>
            <person name="Glavina del Rio T."/>
            <person name="Hammon N."/>
            <person name="Israni S."/>
            <person name="Dalin E."/>
            <person name="Tice H."/>
            <person name="Pitluck S."/>
            <person name="Chertkov O."/>
            <person name="Brettin T."/>
            <person name="Bruce D."/>
            <person name="Han C."/>
            <person name="Tapia R."/>
            <person name="Gilna P."/>
            <person name="Schmutz J."/>
            <person name="Larimer F."/>
            <person name="Land M."/>
            <person name="Hauser L."/>
            <person name="Kyrpides N."/>
            <person name="Mikhailova N."/>
            <person name="Richardson P."/>
        </authorList>
    </citation>
    <scope>NUCLEOTIDE SEQUENCE [LARGE SCALE GENOMIC DNA]</scope>
    <source>
        <strain>BNC1</strain>
    </source>
</reference>
<name>NUOB_CHESB</name>
<organism>
    <name type="scientific">Chelativorans sp. (strain BNC1)</name>
    <dbReference type="NCBI Taxonomy" id="266779"/>
    <lineage>
        <taxon>Bacteria</taxon>
        <taxon>Pseudomonadati</taxon>
        <taxon>Pseudomonadota</taxon>
        <taxon>Alphaproteobacteria</taxon>
        <taxon>Hyphomicrobiales</taxon>
        <taxon>Phyllobacteriaceae</taxon>
        <taxon>Chelativorans</taxon>
    </lineage>
</organism>
<evidence type="ECO:0000250" key="1"/>
<evidence type="ECO:0000255" key="2">
    <source>
        <dbReference type="HAMAP-Rule" id="MF_01356"/>
    </source>
</evidence>
<sequence length="190" mass="20805">MGLNDTLVAPRSRGIIDPNTGNPVGANDPFYGAINEELSDKGFLVTSSEALITWARTGSLMWMTFGLACCAVEMMHTSMPRYDAERFGIAPRASPRQSDVMIVAGTLTNKMAPALRKVYDQMPEPRYVISMGSCANGGGYYHYSYSVVRGCDRIVPVDIYVPGCPPTAEALLYGILLLQKKIRRTGTIER</sequence>
<protein>
    <recommendedName>
        <fullName evidence="2">NADH-quinone oxidoreductase subunit B</fullName>
        <ecNumber evidence="2">7.1.1.-</ecNumber>
    </recommendedName>
    <alternativeName>
        <fullName evidence="2">NADH dehydrogenase I subunit B</fullName>
    </alternativeName>
    <alternativeName>
        <fullName evidence="2">NDH-1 subunit B</fullName>
    </alternativeName>
</protein>
<dbReference type="EC" id="7.1.1.-" evidence="2"/>
<dbReference type="EMBL" id="CP000390">
    <property type="protein sequence ID" value="ABG62420.1"/>
    <property type="molecule type" value="Genomic_DNA"/>
</dbReference>
<dbReference type="SMR" id="Q11JK5"/>
<dbReference type="STRING" id="266779.Meso_1023"/>
<dbReference type="KEGG" id="mes:Meso_1023"/>
<dbReference type="eggNOG" id="COG0377">
    <property type="taxonomic scope" value="Bacteria"/>
</dbReference>
<dbReference type="HOGENOM" id="CLU_055737_7_3_5"/>
<dbReference type="OrthoDB" id="9786737at2"/>
<dbReference type="GO" id="GO:0005886">
    <property type="term" value="C:plasma membrane"/>
    <property type="evidence" value="ECO:0007669"/>
    <property type="project" value="UniProtKB-SubCell"/>
</dbReference>
<dbReference type="GO" id="GO:0045271">
    <property type="term" value="C:respiratory chain complex I"/>
    <property type="evidence" value="ECO:0007669"/>
    <property type="project" value="TreeGrafter"/>
</dbReference>
<dbReference type="GO" id="GO:0051539">
    <property type="term" value="F:4 iron, 4 sulfur cluster binding"/>
    <property type="evidence" value="ECO:0007669"/>
    <property type="project" value="UniProtKB-KW"/>
</dbReference>
<dbReference type="GO" id="GO:0005506">
    <property type="term" value="F:iron ion binding"/>
    <property type="evidence" value="ECO:0007669"/>
    <property type="project" value="UniProtKB-UniRule"/>
</dbReference>
<dbReference type="GO" id="GO:0008137">
    <property type="term" value="F:NADH dehydrogenase (ubiquinone) activity"/>
    <property type="evidence" value="ECO:0007669"/>
    <property type="project" value="InterPro"/>
</dbReference>
<dbReference type="GO" id="GO:0050136">
    <property type="term" value="F:NADH:ubiquinone reductase (non-electrogenic) activity"/>
    <property type="evidence" value="ECO:0007669"/>
    <property type="project" value="UniProtKB-UniRule"/>
</dbReference>
<dbReference type="GO" id="GO:0048038">
    <property type="term" value="F:quinone binding"/>
    <property type="evidence" value="ECO:0007669"/>
    <property type="project" value="UniProtKB-KW"/>
</dbReference>
<dbReference type="GO" id="GO:0009060">
    <property type="term" value="P:aerobic respiration"/>
    <property type="evidence" value="ECO:0007669"/>
    <property type="project" value="TreeGrafter"/>
</dbReference>
<dbReference type="GO" id="GO:0015990">
    <property type="term" value="P:electron transport coupled proton transport"/>
    <property type="evidence" value="ECO:0007669"/>
    <property type="project" value="TreeGrafter"/>
</dbReference>
<dbReference type="FunFam" id="3.40.50.12280:FF:000001">
    <property type="entry name" value="NADH-quinone oxidoreductase subunit B 2"/>
    <property type="match status" value="1"/>
</dbReference>
<dbReference type="Gene3D" id="3.40.50.12280">
    <property type="match status" value="1"/>
</dbReference>
<dbReference type="HAMAP" id="MF_01356">
    <property type="entry name" value="NDH1_NuoB"/>
    <property type="match status" value="1"/>
</dbReference>
<dbReference type="InterPro" id="IPR006137">
    <property type="entry name" value="NADH_UbQ_OxRdtase-like_20kDa"/>
</dbReference>
<dbReference type="InterPro" id="IPR006138">
    <property type="entry name" value="NADH_UQ_OxRdtase_20Kd_su"/>
</dbReference>
<dbReference type="NCBIfam" id="TIGR01957">
    <property type="entry name" value="nuoB_fam"/>
    <property type="match status" value="1"/>
</dbReference>
<dbReference type="NCBIfam" id="NF005012">
    <property type="entry name" value="PRK06411.1"/>
    <property type="match status" value="1"/>
</dbReference>
<dbReference type="PANTHER" id="PTHR11995">
    <property type="entry name" value="NADH DEHYDROGENASE"/>
    <property type="match status" value="1"/>
</dbReference>
<dbReference type="PANTHER" id="PTHR11995:SF14">
    <property type="entry name" value="NADH DEHYDROGENASE [UBIQUINONE] IRON-SULFUR PROTEIN 7, MITOCHONDRIAL"/>
    <property type="match status" value="1"/>
</dbReference>
<dbReference type="Pfam" id="PF01058">
    <property type="entry name" value="Oxidored_q6"/>
    <property type="match status" value="1"/>
</dbReference>
<dbReference type="SUPFAM" id="SSF56770">
    <property type="entry name" value="HydA/Nqo6-like"/>
    <property type="match status" value="1"/>
</dbReference>
<dbReference type="PROSITE" id="PS01150">
    <property type="entry name" value="COMPLEX1_20K"/>
    <property type="match status" value="1"/>
</dbReference>
<comment type="function">
    <text evidence="1">NDH-1 shuttles electrons from NADH, via FMN and iron-sulfur (Fe-S) centers, to quinones in the respiratory chain. Couples the redox reaction to proton translocation (for every two electrons transferred, four hydrogen ions are translocated across the cytoplasmic membrane), and thus conserves the redox energy in a proton gradient (By similarity).</text>
</comment>
<comment type="catalytic activity">
    <reaction evidence="2">
        <text>a quinone + NADH + 5 H(+)(in) = a quinol + NAD(+) + 4 H(+)(out)</text>
        <dbReference type="Rhea" id="RHEA:57888"/>
        <dbReference type="ChEBI" id="CHEBI:15378"/>
        <dbReference type="ChEBI" id="CHEBI:24646"/>
        <dbReference type="ChEBI" id="CHEBI:57540"/>
        <dbReference type="ChEBI" id="CHEBI:57945"/>
        <dbReference type="ChEBI" id="CHEBI:132124"/>
    </reaction>
</comment>
<comment type="cofactor">
    <cofactor evidence="2">
        <name>[4Fe-4S] cluster</name>
        <dbReference type="ChEBI" id="CHEBI:49883"/>
    </cofactor>
    <text evidence="2">Binds 1 [4Fe-4S] cluster.</text>
</comment>
<comment type="subunit">
    <text evidence="2">NDH-1 is composed of 14 different subunits. Subunits NuoB, C, D, E, F, and G constitute the peripheral sector of the complex.</text>
</comment>
<comment type="subcellular location">
    <subcellularLocation>
        <location evidence="2">Cell inner membrane</location>
        <topology evidence="2">Peripheral membrane protein</topology>
        <orientation evidence="2">Cytoplasmic side</orientation>
    </subcellularLocation>
</comment>
<comment type="similarity">
    <text evidence="2">Belongs to the complex I 20 kDa subunit family.</text>
</comment>
<proteinExistence type="inferred from homology"/>
<keyword id="KW-0004">4Fe-4S</keyword>
<keyword id="KW-0997">Cell inner membrane</keyword>
<keyword id="KW-1003">Cell membrane</keyword>
<keyword id="KW-0408">Iron</keyword>
<keyword id="KW-0411">Iron-sulfur</keyword>
<keyword id="KW-0472">Membrane</keyword>
<keyword id="KW-0479">Metal-binding</keyword>
<keyword id="KW-0520">NAD</keyword>
<keyword id="KW-0874">Quinone</keyword>
<keyword id="KW-1278">Translocase</keyword>
<keyword id="KW-0813">Transport</keyword>
<keyword id="KW-0830">Ubiquinone</keyword>
<feature type="chain" id="PRO_0000358423" description="NADH-quinone oxidoreductase subunit B">
    <location>
        <begin position="1"/>
        <end position="190"/>
    </location>
</feature>
<feature type="binding site" evidence="2">
    <location>
        <position position="69"/>
    </location>
    <ligand>
        <name>[4Fe-4S] cluster</name>
        <dbReference type="ChEBI" id="CHEBI:49883"/>
    </ligand>
</feature>
<feature type="binding site" evidence="2">
    <location>
        <position position="70"/>
    </location>
    <ligand>
        <name>[4Fe-4S] cluster</name>
        <dbReference type="ChEBI" id="CHEBI:49883"/>
    </ligand>
</feature>
<feature type="binding site" evidence="2">
    <location>
        <position position="134"/>
    </location>
    <ligand>
        <name>[4Fe-4S] cluster</name>
        <dbReference type="ChEBI" id="CHEBI:49883"/>
    </ligand>
</feature>
<feature type="binding site" evidence="2">
    <location>
        <position position="164"/>
    </location>
    <ligand>
        <name>[4Fe-4S] cluster</name>
        <dbReference type="ChEBI" id="CHEBI:49883"/>
    </ligand>
</feature>
<accession>Q11JK5</accession>
<gene>
    <name evidence="2" type="primary">nuoB</name>
    <name type="ordered locus">Meso_1023</name>
</gene>